<protein>
    <recommendedName>
        <fullName evidence="1">Putative pre-16S rRNA nuclease</fullName>
        <ecNumber evidence="1">3.1.-.-</ecNumber>
    </recommendedName>
</protein>
<accession>Q1J498</accession>
<reference key="1">
    <citation type="journal article" date="2006" name="Proc. Natl. Acad. Sci. U.S.A.">
        <title>Molecular genetic anatomy of inter- and intraserotype variation in the human bacterial pathogen group A Streptococcus.</title>
        <authorList>
            <person name="Beres S.B."/>
            <person name="Richter E.W."/>
            <person name="Nagiec M.J."/>
            <person name="Sumby P."/>
            <person name="Porcella S.F."/>
            <person name="DeLeo F.R."/>
            <person name="Musser J.M."/>
        </authorList>
    </citation>
    <scope>NUCLEOTIDE SEQUENCE [LARGE SCALE GENOMIC DNA]</scope>
    <source>
        <strain>MGAS10750</strain>
    </source>
</reference>
<feature type="chain" id="PRO_0000257604" description="Putative pre-16S rRNA nuclease">
    <location>
        <begin position="1"/>
        <end position="139"/>
    </location>
</feature>
<sequence>MRIMGLDVGSKTVGVAISDPLGFTAQGLEIIKIDEEKAEFGFTRLEELVKQYQVEQFVIGLPKNMNNTNGPRVDASITYGNHIEHLFGLPVHYQDERLTTVEAERMLIEQADISRGKRKKVIDKLAAQLILQNYLNRNF</sequence>
<keyword id="KW-0963">Cytoplasm</keyword>
<keyword id="KW-0378">Hydrolase</keyword>
<keyword id="KW-0540">Nuclease</keyword>
<keyword id="KW-0690">Ribosome biogenesis</keyword>
<gene>
    <name type="ordered locus">MGAS10750_Spy1888</name>
</gene>
<proteinExistence type="inferred from homology"/>
<name>YQGF_STRPF</name>
<organism>
    <name type="scientific">Streptococcus pyogenes serotype M4 (strain MGAS10750)</name>
    <dbReference type="NCBI Taxonomy" id="370554"/>
    <lineage>
        <taxon>Bacteria</taxon>
        <taxon>Bacillati</taxon>
        <taxon>Bacillota</taxon>
        <taxon>Bacilli</taxon>
        <taxon>Lactobacillales</taxon>
        <taxon>Streptococcaceae</taxon>
        <taxon>Streptococcus</taxon>
    </lineage>
</organism>
<comment type="function">
    <text evidence="1">Could be a nuclease involved in processing of the 5'-end of pre-16S rRNA.</text>
</comment>
<comment type="subcellular location">
    <subcellularLocation>
        <location evidence="1">Cytoplasm</location>
    </subcellularLocation>
</comment>
<comment type="similarity">
    <text evidence="1">Belongs to the YqgF nuclease family.</text>
</comment>
<dbReference type="EC" id="3.1.-.-" evidence="1"/>
<dbReference type="EMBL" id="CP000262">
    <property type="protein sequence ID" value="ABF38838.1"/>
    <property type="molecule type" value="Genomic_DNA"/>
</dbReference>
<dbReference type="SMR" id="Q1J498"/>
<dbReference type="KEGG" id="spi:MGAS10750_Spy1888"/>
<dbReference type="HOGENOM" id="CLU_098240_2_0_9"/>
<dbReference type="Proteomes" id="UP000002434">
    <property type="component" value="Chromosome"/>
</dbReference>
<dbReference type="GO" id="GO:0005829">
    <property type="term" value="C:cytosol"/>
    <property type="evidence" value="ECO:0007669"/>
    <property type="project" value="TreeGrafter"/>
</dbReference>
<dbReference type="GO" id="GO:0004518">
    <property type="term" value="F:nuclease activity"/>
    <property type="evidence" value="ECO:0007669"/>
    <property type="project" value="UniProtKB-KW"/>
</dbReference>
<dbReference type="GO" id="GO:0000967">
    <property type="term" value="P:rRNA 5'-end processing"/>
    <property type="evidence" value="ECO:0007669"/>
    <property type="project" value="UniProtKB-UniRule"/>
</dbReference>
<dbReference type="CDD" id="cd16964">
    <property type="entry name" value="YqgF"/>
    <property type="match status" value="1"/>
</dbReference>
<dbReference type="FunFam" id="3.30.420.140:FF:000003">
    <property type="entry name" value="Putative pre-16S rRNA nuclease"/>
    <property type="match status" value="1"/>
</dbReference>
<dbReference type="Gene3D" id="3.30.420.140">
    <property type="entry name" value="YqgF/RNase H-like domain"/>
    <property type="match status" value="1"/>
</dbReference>
<dbReference type="HAMAP" id="MF_00651">
    <property type="entry name" value="Nuclease_YqgF"/>
    <property type="match status" value="1"/>
</dbReference>
<dbReference type="InterPro" id="IPR012337">
    <property type="entry name" value="RNaseH-like_sf"/>
</dbReference>
<dbReference type="InterPro" id="IPR005227">
    <property type="entry name" value="YqgF"/>
</dbReference>
<dbReference type="InterPro" id="IPR006641">
    <property type="entry name" value="YqgF/RNaseH-like_dom"/>
</dbReference>
<dbReference type="InterPro" id="IPR037027">
    <property type="entry name" value="YqgF/RNaseH-like_dom_sf"/>
</dbReference>
<dbReference type="NCBIfam" id="TIGR00250">
    <property type="entry name" value="RNAse_H_YqgF"/>
    <property type="match status" value="1"/>
</dbReference>
<dbReference type="PANTHER" id="PTHR33317">
    <property type="entry name" value="POLYNUCLEOTIDYL TRANSFERASE, RIBONUCLEASE H-LIKE SUPERFAMILY PROTEIN"/>
    <property type="match status" value="1"/>
</dbReference>
<dbReference type="PANTHER" id="PTHR33317:SF4">
    <property type="entry name" value="POLYNUCLEOTIDYL TRANSFERASE, RIBONUCLEASE H-LIKE SUPERFAMILY PROTEIN"/>
    <property type="match status" value="1"/>
</dbReference>
<dbReference type="Pfam" id="PF03652">
    <property type="entry name" value="RuvX"/>
    <property type="match status" value="1"/>
</dbReference>
<dbReference type="SMART" id="SM00732">
    <property type="entry name" value="YqgFc"/>
    <property type="match status" value="1"/>
</dbReference>
<dbReference type="SUPFAM" id="SSF53098">
    <property type="entry name" value="Ribonuclease H-like"/>
    <property type="match status" value="1"/>
</dbReference>
<evidence type="ECO:0000255" key="1">
    <source>
        <dbReference type="HAMAP-Rule" id="MF_00651"/>
    </source>
</evidence>